<reference key="1">
    <citation type="journal article" date="1989" name="Virology">
        <title>Nucleotide sequence of human papillomavirus type 31: a cervical neoplasia-associated virus.</title>
        <authorList>
            <person name="Goldsborough M.D."/>
            <person name="Disilvestre D."/>
            <person name="Temple G.F."/>
            <person name="Lorincz A.T."/>
        </authorList>
    </citation>
    <scope>NUCLEOTIDE SEQUENCE [GENOMIC DNA]</scope>
</reference>
<keyword id="KW-1048">Host nucleus</keyword>
<keyword id="KW-1185">Reference proteome</keyword>
<accession>P0DKB0</accession>
<evidence type="ECO:0000250" key="1">
    <source>
        <dbReference type="UniProtKB" id="P0DKA0"/>
    </source>
</evidence>
<evidence type="ECO:0000256" key="2">
    <source>
        <dbReference type="SAM" id="MobiDB-lite"/>
    </source>
</evidence>
<evidence type="ECO:0000305" key="3"/>
<organism>
    <name type="scientific">Human papillomavirus 31</name>
    <dbReference type="NCBI Taxonomy" id="10585"/>
    <lineage>
        <taxon>Viruses</taxon>
        <taxon>Monodnaviria</taxon>
        <taxon>Shotokuvirae</taxon>
        <taxon>Cossaviricota</taxon>
        <taxon>Papovaviricetes</taxon>
        <taxon>Zurhausenvirales</taxon>
        <taxon>Papillomaviridae</taxon>
        <taxon>Firstpapillomavirinae</taxon>
        <taxon>Alphapapillomavirus</taxon>
        <taxon>Alphapapillomavirus 9</taxon>
    </lineage>
</organism>
<protein>
    <recommendedName>
        <fullName>Protein E8^E2C</fullName>
    </recommendedName>
</protein>
<sequence>MAILKWKRSRWYSSDEISFAGIVTKLPTANNTTTSNSKTCALGTSEGVRRATTSTKRPRTEPEHRNTHHPNKLLRGDSVDSVNCGVISAAACTNQTRAVSCPATTPIIHLKGDANILKCLRYRLSKYKQLYEQVSSTWHWTCTDGKHKNAIVTLTYISTSQRDDFLNTVKIPNTVSVSTGYMTI</sequence>
<feature type="chain" id="PRO_0000438750" description="Protein E8^E2C">
    <location>
        <begin position="1"/>
        <end position="184"/>
    </location>
</feature>
<feature type="region of interest" description="Disordered" evidence="2">
    <location>
        <begin position="33"/>
        <end position="74"/>
    </location>
</feature>
<dbReference type="EMBL" id="J04353">
    <property type="status" value="NOT_ANNOTATED_CDS"/>
    <property type="molecule type" value="Genomic_DNA"/>
</dbReference>
<dbReference type="SMR" id="P0DKB0"/>
<dbReference type="Proteomes" id="UP000009116">
    <property type="component" value="Genome"/>
</dbReference>
<dbReference type="GO" id="GO:0042025">
    <property type="term" value="C:host cell nucleus"/>
    <property type="evidence" value="ECO:0007669"/>
    <property type="project" value="UniProtKB-SubCell"/>
</dbReference>
<dbReference type="GO" id="GO:0003677">
    <property type="term" value="F:DNA binding"/>
    <property type="evidence" value="ECO:0007669"/>
    <property type="project" value="InterPro"/>
</dbReference>
<dbReference type="GO" id="GO:0003700">
    <property type="term" value="F:DNA-binding transcription factor activity"/>
    <property type="evidence" value="ECO:0007669"/>
    <property type="project" value="InterPro"/>
</dbReference>
<dbReference type="GO" id="GO:0006275">
    <property type="term" value="P:regulation of DNA replication"/>
    <property type="evidence" value="ECO:0007669"/>
    <property type="project" value="InterPro"/>
</dbReference>
<dbReference type="Gene3D" id="3.30.70.330">
    <property type="match status" value="1"/>
</dbReference>
<dbReference type="InterPro" id="IPR035975">
    <property type="entry name" value="E2/EBNA1_C_sf"/>
</dbReference>
<dbReference type="InterPro" id="IPR012677">
    <property type="entry name" value="Nucleotide-bd_a/b_plait_sf"/>
</dbReference>
<dbReference type="InterPro" id="IPR000427">
    <property type="entry name" value="Papillomavirus_E2_C"/>
</dbReference>
<dbReference type="Pfam" id="PF00511">
    <property type="entry name" value="PPV_E2_C"/>
    <property type="match status" value="1"/>
</dbReference>
<dbReference type="SUPFAM" id="SSF54957">
    <property type="entry name" value="Viral DNA-binding domain"/>
    <property type="match status" value="1"/>
</dbReference>
<proteinExistence type="inferred from homology"/>
<comment type="function">
    <text evidence="1">Plays a role in limiting the replication of viral DNA in keratinocytes. Recruits the host NCoR/SMRT complex to viral replication foci to mediate repression of both viral replication and transcription.</text>
</comment>
<comment type="subcellular location">
    <subcellularLocation>
        <location evidence="1">Host nucleus</location>
    </subcellularLocation>
</comment>
<comment type="similarity">
    <text evidence="3">Belongs to the papillomaviridae E8^E2C protein family.</text>
</comment>
<name>VE8E2_HPV31</name>
<organismHost>
    <name type="scientific">Homo sapiens</name>
    <name type="common">Human</name>
    <dbReference type="NCBI Taxonomy" id="9606"/>
</organismHost>